<name>Y003_SIFVH</name>
<proteinExistence type="predicted"/>
<dbReference type="EMBL" id="AF440571">
    <property type="protein sequence ID" value="AAL27714.1"/>
    <property type="molecule type" value="Genomic_DNA"/>
</dbReference>
<dbReference type="RefSeq" id="NP_445668.1">
    <property type="nucleotide sequence ID" value="NC_003214.2"/>
</dbReference>
<dbReference type="GeneID" id="922277"/>
<dbReference type="KEGG" id="vg:922277"/>
<dbReference type="Proteomes" id="UP000007017">
    <property type="component" value="Segment"/>
</dbReference>
<organismHost>
    <name type="scientific">Saccharolobus islandicus</name>
    <name type="common">Sulfolobus islandicus</name>
    <dbReference type="NCBI Taxonomy" id="43080"/>
</organismHost>
<reference key="1">
    <citation type="journal article" date="2000" name="Virology">
        <title>A novel lipothrixvirus, SIFV, of the extremely thermophilic crenarchaeon Sulfolobus.</title>
        <authorList>
            <person name="Arnold H.P."/>
            <person name="Zillig W."/>
            <person name="Ziese U."/>
            <person name="Holz I."/>
            <person name="Crosby M."/>
            <person name="Utterback T."/>
            <person name="Weidmann J.F."/>
            <person name="Umayam L.A."/>
            <person name="Teffera K."/>
            <person name="Kristjanson J.K."/>
            <person name="Klenk H.P."/>
            <person name="Nelson K.E."/>
            <person name="Fraser C.M."/>
        </authorList>
    </citation>
    <scope>NUCLEOTIDE SEQUENCE [GENOMIC DNA]</scope>
</reference>
<feature type="chain" id="PRO_0000385402" description="Uncharacterized protein 3">
    <location>
        <begin position="1"/>
        <end position="139"/>
    </location>
</feature>
<organism>
    <name type="scientific">Sulfolobus islandicus filamentous virus (isolate Iceland/Hveragerdi)</name>
    <name type="common">SIFV</name>
    <dbReference type="NCBI Taxonomy" id="654908"/>
    <lineage>
        <taxon>Viruses</taxon>
        <taxon>Adnaviria</taxon>
        <taxon>Zilligvirae</taxon>
        <taxon>Taleaviricota</taxon>
        <taxon>Tokiviricetes</taxon>
        <taxon>Ligamenvirales</taxon>
        <taxon>Lipothrixviridae</taxon>
        <taxon>Betalipothrixvirus</taxon>
        <taxon>Sulfolobus islandicus filamentous virus</taxon>
    </lineage>
</organism>
<protein>
    <recommendedName>
        <fullName>Uncharacterized protein 3</fullName>
    </recommendedName>
</protein>
<gene>
    <name type="primary">SIFV0003</name>
</gene>
<keyword id="KW-1185">Reference proteome</keyword>
<sequence>MGGVKHLNEHEETLLLNELIKRGFKIYVKTRMGKKEVVSIKAEKGLVITRTSDGMEIIEAPKNFQRREFIIKPRYPEPNPVAGSSEIYKLLSTKKEIIYREEKVTRVELVNNNLILETDKGHIYILTPSSLFEYPIYTW</sequence>
<accession>Q914M7</accession>